<sequence>MGQRVAEVQRKTKETDIKLILNIDGNGDYKISTGIGFFDHMLQLFSHHGKFDIDLEAKGDIYIDDHHTIEDVGIVLGQAFLKALSDKRGIKRYAHVILPMDEALIMVAVDISGRPYLAFDVDFKLPKLGDMTSQMVVEFFKAFVWSSKTTVHIKKLAGENDHHVCEAIFKAIGRTLKEACTIIDDRIPSSKGVL</sequence>
<organism>
    <name type="scientific">Caldicellulosiruptor bescii (strain ATCC BAA-1888 / DSM 6725 / KCTC 15123 / Z-1320)</name>
    <name type="common">Anaerocellum thermophilum</name>
    <dbReference type="NCBI Taxonomy" id="521460"/>
    <lineage>
        <taxon>Bacteria</taxon>
        <taxon>Bacillati</taxon>
        <taxon>Bacillota</taxon>
        <taxon>Bacillota incertae sedis</taxon>
        <taxon>Caldicellulosiruptorales</taxon>
        <taxon>Caldicellulosiruptoraceae</taxon>
        <taxon>Caldicellulosiruptor</taxon>
    </lineage>
</organism>
<reference key="1">
    <citation type="submission" date="2009-01" db="EMBL/GenBank/DDBJ databases">
        <title>Complete sequence of chromosome of Caldicellulosiruptor becscii DSM 6725.</title>
        <authorList>
            <person name="Lucas S."/>
            <person name="Copeland A."/>
            <person name="Lapidus A."/>
            <person name="Glavina del Rio T."/>
            <person name="Tice H."/>
            <person name="Bruce D."/>
            <person name="Goodwin L."/>
            <person name="Pitluck S."/>
            <person name="Sims D."/>
            <person name="Meincke L."/>
            <person name="Brettin T."/>
            <person name="Detter J.C."/>
            <person name="Han C."/>
            <person name="Larimer F."/>
            <person name="Land M."/>
            <person name="Hauser L."/>
            <person name="Kyrpides N."/>
            <person name="Ovchinnikova G."/>
            <person name="Kataeva I."/>
            <person name="Adams M.W.W."/>
        </authorList>
    </citation>
    <scope>NUCLEOTIDE SEQUENCE [LARGE SCALE GENOMIC DNA]</scope>
    <source>
        <strain>ATCC BAA-1888 / DSM 6725 / KCTC 15123 / Z-1320</strain>
    </source>
</reference>
<name>HIS7_CALBD</name>
<gene>
    <name evidence="1" type="primary">hisB</name>
    <name type="ordered locus">Athe_1476</name>
</gene>
<protein>
    <recommendedName>
        <fullName evidence="1">Imidazoleglycerol-phosphate dehydratase</fullName>
        <shortName evidence="1">IGPD</shortName>
        <ecNumber evidence="1">4.2.1.19</ecNumber>
    </recommendedName>
</protein>
<keyword id="KW-0028">Amino-acid biosynthesis</keyword>
<keyword id="KW-0963">Cytoplasm</keyword>
<keyword id="KW-0368">Histidine biosynthesis</keyword>
<keyword id="KW-0456">Lyase</keyword>
<accession>B9MJR6</accession>
<proteinExistence type="inferred from homology"/>
<feature type="chain" id="PRO_1000118210" description="Imidazoleglycerol-phosphate dehydratase">
    <location>
        <begin position="1"/>
        <end position="194"/>
    </location>
</feature>
<dbReference type="EC" id="4.2.1.19" evidence="1"/>
<dbReference type="EMBL" id="CP001393">
    <property type="protein sequence ID" value="ACM60574.1"/>
    <property type="molecule type" value="Genomic_DNA"/>
</dbReference>
<dbReference type="RefSeq" id="WP_015907935.1">
    <property type="nucleotide sequence ID" value="NC_012034.1"/>
</dbReference>
<dbReference type="SMR" id="B9MJR6"/>
<dbReference type="STRING" id="521460.Athe_1476"/>
<dbReference type="GeneID" id="31772821"/>
<dbReference type="KEGG" id="ate:Athe_1476"/>
<dbReference type="eggNOG" id="COG0131">
    <property type="taxonomic scope" value="Bacteria"/>
</dbReference>
<dbReference type="HOGENOM" id="CLU_044308_2_0_9"/>
<dbReference type="UniPathway" id="UPA00031">
    <property type="reaction ID" value="UER00011"/>
</dbReference>
<dbReference type="Proteomes" id="UP000007723">
    <property type="component" value="Chromosome"/>
</dbReference>
<dbReference type="GO" id="GO:0005737">
    <property type="term" value="C:cytoplasm"/>
    <property type="evidence" value="ECO:0007669"/>
    <property type="project" value="UniProtKB-SubCell"/>
</dbReference>
<dbReference type="GO" id="GO:0004424">
    <property type="term" value="F:imidazoleglycerol-phosphate dehydratase activity"/>
    <property type="evidence" value="ECO:0007669"/>
    <property type="project" value="UniProtKB-UniRule"/>
</dbReference>
<dbReference type="GO" id="GO:0000105">
    <property type="term" value="P:L-histidine biosynthetic process"/>
    <property type="evidence" value="ECO:0007669"/>
    <property type="project" value="UniProtKB-UniRule"/>
</dbReference>
<dbReference type="CDD" id="cd07914">
    <property type="entry name" value="IGPD"/>
    <property type="match status" value="1"/>
</dbReference>
<dbReference type="FunFam" id="3.30.230.40:FF:000001">
    <property type="entry name" value="Imidazoleglycerol-phosphate dehydratase HisB"/>
    <property type="match status" value="1"/>
</dbReference>
<dbReference type="FunFam" id="3.30.230.40:FF:000003">
    <property type="entry name" value="Imidazoleglycerol-phosphate dehydratase HisB"/>
    <property type="match status" value="1"/>
</dbReference>
<dbReference type="Gene3D" id="3.30.230.40">
    <property type="entry name" value="Imidazole glycerol phosphate dehydratase, domain 1"/>
    <property type="match status" value="2"/>
</dbReference>
<dbReference type="HAMAP" id="MF_00076">
    <property type="entry name" value="HisB"/>
    <property type="match status" value="1"/>
</dbReference>
<dbReference type="InterPro" id="IPR038494">
    <property type="entry name" value="IGPD_sf"/>
</dbReference>
<dbReference type="InterPro" id="IPR000807">
    <property type="entry name" value="ImidazoleglycerolP_deHydtase"/>
</dbReference>
<dbReference type="InterPro" id="IPR020565">
    <property type="entry name" value="ImidazoleglycerP_deHydtase_CS"/>
</dbReference>
<dbReference type="InterPro" id="IPR020568">
    <property type="entry name" value="Ribosomal_Su5_D2-typ_SF"/>
</dbReference>
<dbReference type="NCBIfam" id="NF002111">
    <property type="entry name" value="PRK00951.2-1"/>
    <property type="match status" value="1"/>
</dbReference>
<dbReference type="NCBIfam" id="NF002114">
    <property type="entry name" value="PRK00951.2-4"/>
    <property type="match status" value="1"/>
</dbReference>
<dbReference type="PANTHER" id="PTHR23133:SF2">
    <property type="entry name" value="IMIDAZOLEGLYCEROL-PHOSPHATE DEHYDRATASE"/>
    <property type="match status" value="1"/>
</dbReference>
<dbReference type="PANTHER" id="PTHR23133">
    <property type="entry name" value="IMIDAZOLEGLYCEROL-PHOSPHATE DEHYDRATASE HIS7"/>
    <property type="match status" value="1"/>
</dbReference>
<dbReference type="Pfam" id="PF00475">
    <property type="entry name" value="IGPD"/>
    <property type="match status" value="1"/>
</dbReference>
<dbReference type="SUPFAM" id="SSF54211">
    <property type="entry name" value="Ribosomal protein S5 domain 2-like"/>
    <property type="match status" value="2"/>
</dbReference>
<dbReference type="PROSITE" id="PS00954">
    <property type="entry name" value="IGP_DEHYDRATASE_1"/>
    <property type="match status" value="1"/>
</dbReference>
<dbReference type="PROSITE" id="PS00955">
    <property type="entry name" value="IGP_DEHYDRATASE_2"/>
    <property type="match status" value="1"/>
</dbReference>
<comment type="catalytic activity">
    <reaction evidence="1">
        <text>D-erythro-1-(imidazol-4-yl)glycerol 3-phosphate = 3-(imidazol-4-yl)-2-oxopropyl phosphate + H2O</text>
        <dbReference type="Rhea" id="RHEA:11040"/>
        <dbReference type="ChEBI" id="CHEBI:15377"/>
        <dbReference type="ChEBI" id="CHEBI:57766"/>
        <dbReference type="ChEBI" id="CHEBI:58278"/>
        <dbReference type="EC" id="4.2.1.19"/>
    </reaction>
</comment>
<comment type="pathway">
    <text evidence="1">Amino-acid biosynthesis; L-histidine biosynthesis; L-histidine from 5-phospho-alpha-D-ribose 1-diphosphate: step 6/9.</text>
</comment>
<comment type="subcellular location">
    <subcellularLocation>
        <location evidence="1">Cytoplasm</location>
    </subcellularLocation>
</comment>
<comment type="similarity">
    <text evidence="1">Belongs to the imidazoleglycerol-phosphate dehydratase family.</text>
</comment>
<evidence type="ECO:0000255" key="1">
    <source>
        <dbReference type="HAMAP-Rule" id="MF_00076"/>
    </source>
</evidence>